<sequence>MSQNTGKITQVIGAVVDVEFEPGKLPEIYHALRVTNPAINDSENNLVLEVAQHLGENSVRTIAMDSTDGLKRGQAVLDTGKQICAPVGKKTLGRIINVIGEPVDEMGPIGNDKENPIHREAPPFEDQSTKVEAFTTGIKVVDLLAPYARGGKIGLFGGAGVGKTVLIMELINNIARQHGGFSVFAGVGERTREGNDLWMEMKETGVLEKTALVYGQMNEPPGARARVALTALSIAEHFRDDEGLDVLLFIDNIFRFTQAGSEVSALLGRIPSAVGYQPTLATEMGELQERITSTKNGSITSVQAIYVPADDLTDPAPATAFAHLDATTVLSRQIAELGIYPAVDPLDSTSRILDPQVIGEEHYAIARQVQYILQKYKDLQDIIAILGMDELSEEDKLIVARARKIQRFLSQPFFVAEVFTGSPGKYVELKDTIKGFQEIVSGKHDHLPEQAFYMVGSIEEAVEKAAKLAAV</sequence>
<organism>
    <name type="scientific">Pelobacter propionicus (strain DSM 2379 / NBRC 103807 / OttBd1)</name>
    <dbReference type="NCBI Taxonomy" id="338966"/>
    <lineage>
        <taxon>Bacteria</taxon>
        <taxon>Pseudomonadati</taxon>
        <taxon>Thermodesulfobacteriota</taxon>
        <taxon>Desulfuromonadia</taxon>
        <taxon>Desulfuromonadales</taxon>
        <taxon>Desulfuromonadaceae</taxon>
        <taxon>Pelobacter</taxon>
    </lineage>
</organism>
<gene>
    <name evidence="1" type="primary">atpD1</name>
    <name type="ordered locus">Ppro_0606</name>
</gene>
<dbReference type="EC" id="7.1.2.2" evidence="1"/>
<dbReference type="EMBL" id="CP000482">
    <property type="protein sequence ID" value="ABK98237.1"/>
    <property type="molecule type" value="Genomic_DNA"/>
</dbReference>
<dbReference type="RefSeq" id="WP_011734550.1">
    <property type="nucleotide sequence ID" value="NC_008609.1"/>
</dbReference>
<dbReference type="SMR" id="A1ALL7"/>
<dbReference type="STRING" id="338966.Ppro_0606"/>
<dbReference type="KEGG" id="ppd:Ppro_0606"/>
<dbReference type="eggNOG" id="COG0055">
    <property type="taxonomic scope" value="Bacteria"/>
</dbReference>
<dbReference type="HOGENOM" id="CLU_022398_0_2_7"/>
<dbReference type="OrthoDB" id="9801639at2"/>
<dbReference type="Proteomes" id="UP000006732">
    <property type="component" value="Chromosome"/>
</dbReference>
<dbReference type="GO" id="GO:0005886">
    <property type="term" value="C:plasma membrane"/>
    <property type="evidence" value="ECO:0007669"/>
    <property type="project" value="UniProtKB-SubCell"/>
</dbReference>
<dbReference type="GO" id="GO:0045259">
    <property type="term" value="C:proton-transporting ATP synthase complex"/>
    <property type="evidence" value="ECO:0007669"/>
    <property type="project" value="UniProtKB-KW"/>
</dbReference>
<dbReference type="GO" id="GO:0005524">
    <property type="term" value="F:ATP binding"/>
    <property type="evidence" value="ECO:0007669"/>
    <property type="project" value="UniProtKB-UniRule"/>
</dbReference>
<dbReference type="GO" id="GO:0016887">
    <property type="term" value="F:ATP hydrolysis activity"/>
    <property type="evidence" value="ECO:0007669"/>
    <property type="project" value="InterPro"/>
</dbReference>
<dbReference type="GO" id="GO:0046933">
    <property type="term" value="F:proton-transporting ATP synthase activity, rotational mechanism"/>
    <property type="evidence" value="ECO:0007669"/>
    <property type="project" value="UniProtKB-UniRule"/>
</dbReference>
<dbReference type="CDD" id="cd18110">
    <property type="entry name" value="ATP-synt_F1_beta_C"/>
    <property type="match status" value="1"/>
</dbReference>
<dbReference type="CDD" id="cd18115">
    <property type="entry name" value="ATP-synt_F1_beta_N"/>
    <property type="match status" value="1"/>
</dbReference>
<dbReference type="CDD" id="cd01133">
    <property type="entry name" value="F1-ATPase_beta_CD"/>
    <property type="match status" value="1"/>
</dbReference>
<dbReference type="FunFam" id="1.10.1140.10:FF:000001">
    <property type="entry name" value="ATP synthase subunit beta"/>
    <property type="match status" value="1"/>
</dbReference>
<dbReference type="FunFam" id="2.40.10.170:FF:000005">
    <property type="entry name" value="ATP synthase subunit beta"/>
    <property type="match status" value="1"/>
</dbReference>
<dbReference type="FunFam" id="3.40.50.300:FF:000026">
    <property type="entry name" value="ATP synthase subunit beta"/>
    <property type="match status" value="1"/>
</dbReference>
<dbReference type="Gene3D" id="2.40.10.170">
    <property type="match status" value="1"/>
</dbReference>
<dbReference type="Gene3D" id="1.10.1140.10">
    <property type="entry name" value="Bovine Mitochondrial F1-atpase, Atp Synthase Beta Chain, Chain D, domain 3"/>
    <property type="match status" value="1"/>
</dbReference>
<dbReference type="Gene3D" id="3.40.50.300">
    <property type="entry name" value="P-loop containing nucleotide triphosphate hydrolases"/>
    <property type="match status" value="1"/>
</dbReference>
<dbReference type="HAMAP" id="MF_01347">
    <property type="entry name" value="ATP_synth_beta_bact"/>
    <property type="match status" value="1"/>
</dbReference>
<dbReference type="InterPro" id="IPR003593">
    <property type="entry name" value="AAA+_ATPase"/>
</dbReference>
<dbReference type="InterPro" id="IPR055190">
    <property type="entry name" value="ATP-synt_VA_C"/>
</dbReference>
<dbReference type="InterPro" id="IPR005722">
    <property type="entry name" value="ATP_synth_F1_bsu"/>
</dbReference>
<dbReference type="InterPro" id="IPR020003">
    <property type="entry name" value="ATPase_a/bsu_AS"/>
</dbReference>
<dbReference type="InterPro" id="IPR050053">
    <property type="entry name" value="ATPase_alpha/beta_chains"/>
</dbReference>
<dbReference type="InterPro" id="IPR004100">
    <property type="entry name" value="ATPase_F1/V1/A1_a/bsu_N"/>
</dbReference>
<dbReference type="InterPro" id="IPR036121">
    <property type="entry name" value="ATPase_F1/V1/A1_a/bsu_N_sf"/>
</dbReference>
<dbReference type="InterPro" id="IPR000194">
    <property type="entry name" value="ATPase_F1/V1/A1_a/bsu_nucl-bd"/>
</dbReference>
<dbReference type="InterPro" id="IPR024034">
    <property type="entry name" value="ATPase_F1/V1_b/a_C"/>
</dbReference>
<dbReference type="InterPro" id="IPR027417">
    <property type="entry name" value="P-loop_NTPase"/>
</dbReference>
<dbReference type="NCBIfam" id="TIGR01039">
    <property type="entry name" value="atpD"/>
    <property type="match status" value="1"/>
</dbReference>
<dbReference type="PANTHER" id="PTHR15184">
    <property type="entry name" value="ATP SYNTHASE"/>
    <property type="match status" value="1"/>
</dbReference>
<dbReference type="PANTHER" id="PTHR15184:SF71">
    <property type="entry name" value="ATP SYNTHASE SUBUNIT BETA, MITOCHONDRIAL"/>
    <property type="match status" value="1"/>
</dbReference>
<dbReference type="Pfam" id="PF00006">
    <property type="entry name" value="ATP-synt_ab"/>
    <property type="match status" value="1"/>
</dbReference>
<dbReference type="Pfam" id="PF02874">
    <property type="entry name" value="ATP-synt_ab_N"/>
    <property type="match status" value="1"/>
</dbReference>
<dbReference type="Pfam" id="PF22919">
    <property type="entry name" value="ATP-synt_VA_C"/>
    <property type="match status" value="1"/>
</dbReference>
<dbReference type="PIRSF" id="PIRSF039072">
    <property type="entry name" value="ATPase_subunit_beta"/>
    <property type="match status" value="1"/>
</dbReference>
<dbReference type="SMART" id="SM00382">
    <property type="entry name" value="AAA"/>
    <property type="match status" value="1"/>
</dbReference>
<dbReference type="SUPFAM" id="SSF47917">
    <property type="entry name" value="C-terminal domain of alpha and beta subunits of F1 ATP synthase"/>
    <property type="match status" value="1"/>
</dbReference>
<dbReference type="SUPFAM" id="SSF50615">
    <property type="entry name" value="N-terminal domain of alpha and beta subunits of F1 ATP synthase"/>
    <property type="match status" value="1"/>
</dbReference>
<dbReference type="SUPFAM" id="SSF52540">
    <property type="entry name" value="P-loop containing nucleoside triphosphate hydrolases"/>
    <property type="match status" value="1"/>
</dbReference>
<dbReference type="PROSITE" id="PS00152">
    <property type="entry name" value="ATPASE_ALPHA_BETA"/>
    <property type="match status" value="1"/>
</dbReference>
<comment type="function">
    <text evidence="1">Produces ATP from ADP in the presence of a proton gradient across the membrane. The catalytic sites are hosted primarily by the beta subunits.</text>
</comment>
<comment type="catalytic activity">
    <reaction evidence="1">
        <text>ATP + H2O + 4 H(+)(in) = ADP + phosphate + 5 H(+)(out)</text>
        <dbReference type="Rhea" id="RHEA:57720"/>
        <dbReference type="ChEBI" id="CHEBI:15377"/>
        <dbReference type="ChEBI" id="CHEBI:15378"/>
        <dbReference type="ChEBI" id="CHEBI:30616"/>
        <dbReference type="ChEBI" id="CHEBI:43474"/>
        <dbReference type="ChEBI" id="CHEBI:456216"/>
        <dbReference type="EC" id="7.1.2.2"/>
    </reaction>
</comment>
<comment type="subunit">
    <text evidence="1">F-type ATPases have 2 components, CF(1) - the catalytic core - and CF(0) - the membrane proton channel. CF(1) has five subunits: alpha(3), beta(3), gamma(1), delta(1), epsilon(1). CF(0) has three main subunits: a(1), b(2) and c(9-12). The alpha and beta chains form an alternating ring which encloses part of the gamma chain. CF(1) is attached to CF(0) by a central stalk formed by the gamma and epsilon chains, while a peripheral stalk is formed by the delta and b chains.</text>
</comment>
<comment type="subcellular location">
    <subcellularLocation>
        <location evidence="1">Cell inner membrane</location>
        <topology evidence="1">Peripheral membrane protein</topology>
    </subcellularLocation>
</comment>
<comment type="similarity">
    <text evidence="1">Belongs to the ATPase alpha/beta chains family.</text>
</comment>
<feature type="chain" id="PRO_0000339564" description="ATP synthase subunit beta 1">
    <location>
        <begin position="1"/>
        <end position="471"/>
    </location>
</feature>
<feature type="binding site" evidence="1">
    <location>
        <begin position="157"/>
        <end position="164"/>
    </location>
    <ligand>
        <name>ATP</name>
        <dbReference type="ChEBI" id="CHEBI:30616"/>
    </ligand>
</feature>
<evidence type="ECO:0000255" key="1">
    <source>
        <dbReference type="HAMAP-Rule" id="MF_01347"/>
    </source>
</evidence>
<name>ATPB1_PELPD</name>
<accession>A1ALL7</accession>
<proteinExistence type="inferred from homology"/>
<keyword id="KW-0066">ATP synthesis</keyword>
<keyword id="KW-0067">ATP-binding</keyword>
<keyword id="KW-0997">Cell inner membrane</keyword>
<keyword id="KW-1003">Cell membrane</keyword>
<keyword id="KW-0139">CF(1)</keyword>
<keyword id="KW-0375">Hydrogen ion transport</keyword>
<keyword id="KW-0406">Ion transport</keyword>
<keyword id="KW-0472">Membrane</keyword>
<keyword id="KW-0547">Nucleotide-binding</keyword>
<keyword id="KW-1185">Reference proteome</keyword>
<keyword id="KW-1278">Translocase</keyword>
<keyword id="KW-0813">Transport</keyword>
<protein>
    <recommendedName>
        <fullName evidence="1">ATP synthase subunit beta 1</fullName>
        <ecNumber evidence="1">7.1.2.2</ecNumber>
    </recommendedName>
    <alternativeName>
        <fullName evidence="1">ATP synthase F1 sector subunit beta 1</fullName>
    </alternativeName>
    <alternativeName>
        <fullName evidence="1">F-ATPase subunit beta 1</fullName>
    </alternativeName>
</protein>
<reference key="1">
    <citation type="submission" date="2006-10" db="EMBL/GenBank/DDBJ databases">
        <title>Complete sequence of chromosome of Pelobacter propionicus DSM 2379.</title>
        <authorList>
            <consortium name="US DOE Joint Genome Institute"/>
            <person name="Copeland A."/>
            <person name="Lucas S."/>
            <person name="Lapidus A."/>
            <person name="Barry K."/>
            <person name="Detter J.C."/>
            <person name="Glavina del Rio T."/>
            <person name="Hammon N."/>
            <person name="Israni S."/>
            <person name="Dalin E."/>
            <person name="Tice H."/>
            <person name="Pitluck S."/>
            <person name="Saunders E."/>
            <person name="Brettin T."/>
            <person name="Bruce D."/>
            <person name="Han C."/>
            <person name="Tapia R."/>
            <person name="Schmutz J."/>
            <person name="Larimer F."/>
            <person name="Land M."/>
            <person name="Hauser L."/>
            <person name="Kyrpides N."/>
            <person name="Kim E."/>
            <person name="Lovley D."/>
            <person name="Richardson P."/>
        </authorList>
    </citation>
    <scope>NUCLEOTIDE SEQUENCE [LARGE SCALE GENOMIC DNA]</scope>
    <source>
        <strain>DSM 2379 / NBRC 103807 / OttBd1</strain>
    </source>
</reference>